<gene>
    <name evidence="1" type="primary">rnfE</name>
    <name type="ordered locus">CGSHiEE_03595</name>
</gene>
<keyword id="KW-0997">Cell inner membrane</keyword>
<keyword id="KW-1003">Cell membrane</keyword>
<keyword id="KW-0249">Electron transport</keyword>
<keyword id="KW-0472">Membrane</keyword>
<keyword id="KW-1278">Translocase</keyword>
<keyword id="KW-0812">Transmembrane</keyword>
<keyword id="KW-1133">Transmembrane helix</keyword>
<keyword id="KW-0813">Transport</keyword>
<evidence type="ECO:0000255" key="1">
    <source>
        <dbReference type="HAMAP-Rule" id="MF_00478"/>
    </source>
</evidence>
<name>RNFE_HAEIE</name>
<sequence>MTDLTEKNTALEEEKIESAVENQQKSIWKEIFAQGIWKNNPAVVQLLGLCPLLAVSSTATNALGLSLATMLVLTCTNTVISLFRQYIPKEIRIPIYVMIIATTVTAVQLLMNAYTYTLYQSLGIFIPLIVTNCIIIGRAEAFASKNSLLHSIWDGFSMGLGMALSLTILGALREIIGQGTIFEGIENLFGEQAKFLTHHIYHTDSSFLLFILPPGAFIGLGLLLAIKNRIDNVKK</sequence>
<protein>
    <recommendedName>
        <fullName evidence="1">Ion-translocating oxidoreductase complex subunit E</fullName>
        <ecNumber evidence="1">7.-.-.-</ecNumber>
    </recommendedName>
    <alternativeName>
        <fullName evidence="1">Rnf electron transport complex subunit E</fullName>
    </alternativeName>
</protein>
<accession>A5UBI7</accession>
<feature type="chain" id="PRO_1000014092" description="Ion-translocating oxidoreductase complex subunit E">
    <location>
        <begin position="1"/>
        <end position="235"/>
    </location>
</feature>
<feature type="transmembrane region" description="Helical" evidence="1">
    <location>
        <begin position="63"/>
        <end position="83"/>
    </location>
</feature>
<feature type="transmembrane region" description="Helical" evidence="1">
    <location>
        <begin position="93"/>
        <end position="113"/>
    </location>
</feature>
<feature type="transmembrane region" description="Helical" evidence="1">
    <location>
        <begin position="117"/>
        <end position="137"/>
    </location>
</feature>
<feature type="transmembrane region" description="Helical" evidence="1">
    <location>
        <begin position="152"/>
        <end position="172"/>
    </location>
</feature>
<feature type="transmembrane region" description="Helical" evidence="1">
    <location>
        <begin position="206"/>
        <end position="226"/>
    </location>
</feature>
<reference key="1">
    <citation type="journal article" date="2007" name="Genome Biol.">
        <title>Characterization and modeling of the Haemophilus influenzae core and supragenomes based on the complete genomic sequences of Rd and 12 clinical nontypeable strains.</title>
        <authorList>
            <person name="Hogg J.S."/>
            <person name="Hu F.Z."/>
            <person name="Janto B."/>
            <person name="Boissy R."/>
            <person name="Hayes J."/>
            <person name="Keefe R."/>
            <person name="Post J.C."/>
            <person name="Ehrlich G.D."/>
        </authorList>
    </citation>
    <scope>NUCLEOTIDE SEQUENCE [LARGE SCALE GENOMIC DNA]</scope>
    <source>
        <strain>PittEE</strain>
    </source>
</reference>
<proteinExistence type="inferred from homology"/>
<organism>
    <name type="scientific">Haemophilus influenzae (strain PittEE)</name>
    <dbReference type="NCBI Taxonomy" id="374930"/>
    <lineage>
        <taxon>Bacteria</taxon>
        <taxon>Pseudomonadati</taxon>
        <taxon>Pseudomonadota</taxon>
        <taxon>Gammaproteobacteria</taxon>
        <taxon>Pasteurellales</taxon>
        <taxon>Pasteurellaceae</taxon>
        <taxon>Haemophilus</taxon>
    </lineage>
</organism>
<comment type="function">
    <text evidence="1">Part of a membrane-bound complex that couples electron transfer with translocation of ions across the membrane.</text>
</comment>
<comment type="subunit">
    <text evidence="1">The complex is composed of six subunits: RnfA, RnfB, RnfC, RnfD, RnfE and RnfG.</text>
</comment>
<comment type="subcellular location">
    <subcellularLocation>
        <location evidence="1">Cell inner membrane</location>
        <topology evidence="1">Multi-pass membrane protein</topology>
    </subcellularLocation>
</comment>
<comment type="similarity">
    <text evidence="1">Belongs to the NqrDE/RnfAE family.</text>
</comment>
<dbReference type="EC" id="7.-.-.-" evidence="1"/>
<dbReference type="EMBL" id="CP000671">
    <property type="protein sequence ID" value="ABQ98138.1"/>
    <property type="molecule type" value="Genomic_DNA"/>
</dbReference>
<dbReference type="SMR" id="A5UBI7"/>
<dbReference type="KEGG" id="hip:CGSHiEE_03595"/>
<dbReference type="HOGENOM" id="CLU_046659_1_0_6"/>
<dbReference type="GO" id="GO:0005886">
    <property type="term" value="C:plasma membrane"/>
    <property type="evidence" value="ECO:0007669"/>
    <property type="project" value="UniProtKB-SubCell"/>
</dbReference>
<dbReference type="GO" id="GO:0022900">
    <property type="term" value="P:electron transport chain"/>
    <property type="evidence" value="ECO:0007669"/>
    <property type="project" value="UniProtKB-UniRule"/>
</dbReference>
<dbReference type="HAMAP" id="MF_00478">
    <property type="entry name" value="RsxE_RnfE"/>
    <property type="match status" value="1"/>
</dbReference>
<dbReference type="InterPro" id="IPR003667">
    <property type="entry name" value="NqrDE/RnfAE"/>
</dbReference>
<dbReference type="InterPro" id="IPR010968">
    <property type="entry name" value="RnfE"/>
</dbReference>
<dbReference type="NCBIfam" id="NF009070">
    <property type="entry name" value="PRK12405.1"/>
    <property type="match status" value="1"/>
</dbReference>
<dbReference type="NCBIfam" id="TIGR01948">
    <property type="entry name" value="rnfE"/>
    <property type="match status" value="1"/>
</dbReference>
<dbReference type="PANTHER" id="PTHR30586">
    <property type="entry name" value="ELECTRON TRANSPORT COMPLEX PROTEIN RNFE"/>
    <property type="match status" value="1"/>
</dbReference>
<dbReference type="PANTHER" id="PTHR30586:SF0">
    <property type="entry name" value="ION-TRANSLOCATING OXIDOREDUCTASE COMPLEX SUBUNIT E"/>
    <property type="match status" value="1"/>
</dbReference>
<dbReference type="Pfam" id="PF02508">
    <property type="entry name" value="Rnf-Nqr"/>
    <property type="match status" value="1"/>
</dbReference>
<dbReference type="PIRSF" id="PIRSF006102">
    <property type="entry name" value="NQR_DE"/>
    <property type="match status" value="1"/>
</dbReference>